<reference key="1">
    <citation type="journal article" date="1998" name="Genomics">
        <title>The mammalian homologue of mago nashi encodes a serum-inducible protein.</title>
        <authorList>
            <person name="Zhao X.F."/>
            <person name="Colaizzo-Anas T."/>
            <person name="Nowak N.J."/>
            <person name="Shows T.B."/>
            <person name="Elliott R.W."/>
            <person name="Aplan P.D."/>
        </authorList>
    </citation>
    <scope>NUCLEOTIDE SEQUENCE [MRNA] (ISOFORM 1)</scope>
</reference>
<reference key="2">
    <citation type="journal article" date="2000" name="Genome Res.">
        <title>Cloning and functional analysis of cDNAs with open reading frames for 300 previously undefined genes expressed in CD34+ hematopoietic stem/progenitor cells.</title>
        <authorList>
            <person name="Zhang Q.-H."/>
            <person name="Ye M."/>
            <person name="Wu X.-Y."/>
            <person name="Ren S.-X."/>
            <person name="Zhao M."/>
            <person name="Zhao C.-J."/>
            <person name="Fu G."/>
            <person name="Shen Y."/>
            <person name="Fan H.-Y."/>
            <person name="Lu G."/>
            <person name="Zhong M."/>
            <person name="Xu X.-R."/>
            <person name="Han Z.-G."/>
            <person name="Zhang J.-W."/>
            <person name="Tao J."/>
            <person name="Huang Q.-H."/>
            <person name="Zhou J."/>
            <person name="Hu G.-X."/>
            <person name="Gu J."/>
            <person name="Chen S.-J."/>
            <person name="Chen Z."/>
        </authorList>
    </citation>
    <scope>NUCLEOTIDE SEQUENCE [LARGE SCALE MRNA] (ISOFORM 1)</scope>
    <source>
        <tissue>Umbilical cord blood</tissue>
    </source>
</reference>
<reference key="3">
    <citation type="journal article" date="2004" name="Nat. Genet.">
        <title>Complete sequencing and characterization of 21,243 full-length human cDNAs.</title>
        <authorList>
            <person name="Ota T."/>
            <person name="Suzuki Y."/>
            <person name="Nishikawa T."/>
            <person name="Otsuki T."/>
            <person name="Sugiyama T."/>
            <person name="Irie R."/>
            <person name="Wakamatsu A."/>
            <person name="Hayashi K."/>
            <person name="Sato H."/>
            <person name="Nagai K."/>
            <person name="Kimura K."/>
            <person name="Makita H."/>
            <person name="Sekine M."/>
            <person name="Obayashi M."/>
            <person name="Nishi T."/>
            <person name="Shibahara T."/>
            <person name="Tanaka T."/>
            <person name="Ishii S."/>
            <person name="Yamamoto J."/>
            <person name="Saito K."/>
            <person name="Kawai Y."/>
            <person name="Isono Y."/>
            <person name="Nakamura Y."/>
            <person name="Nagahari K."/>
            <person name="Murakami K."/>
            <person name="Yasuda T."/>
            <person name="Iwayanagi T."/>
            <person name="Wagatsuma M."/>
            <person name="Shiratori A."/>
            <person name="Sudo H."/>
            <person name="Hosoiri T."/>
            <person name="Kaku Y."/>
            <person name="Kodaira H."/>
            <person name="Kondo H."/>
            <person name="Sugawara M."/>
            <person name="Takahashi M."/>
            <person name="Kanda K."/>
            <person name="Yokoi T."/>
            <person name="Furuya T."/>
            <person name="Kikkawa E."/>
            <person name="Omura Y."/>
            <person name="Abe K."/>
            <person name="Kamihara K."/>
            <person name="Katsuta N."/>
            <person name="Sato K."/>
            <person name="Tanikawa M."/>
            <person name="Yamazaki M."/>
            <person name="Ninomiya K."/>
            <person name="Ishibashi T."/>
            <person name="Yamashita H."/>
            <person name="Murakawa K."/>
            <person name="Fujimori K."/>
            <person name="Tanai H."/>
            <person name="Kimata M."/>
            <person name="Watanabe M."/>
            <person name="Hiraoka S."/>
            <person name="Chiba Y."/>
            <person name="Ishida S."/>
            <person name="Ono Y."/>
            <person name="Takiguchi S."/>
            <person name="Watanabe S."/>
            <person name="Yosida M."/>
            <person name="Hotuta T."/>
            <person name="Kusano J."/>
            <person name="Kanehori K."/>
            <person name="Takahashi-Fujii A."/>
            <person name="Hara H."/>
            <person name="Tanase T.-O."/>
            <person name="Nomura Y."/>
            <person name="Togiya S."/>
            <person name="Komai F."/>
            <person name="Hara R."/>
            <person name="Takeuchi K."/>
            <person name="Arita M."/>
            <person name="Imose N."/>
            <person name="Musashino K."/>
            <person name="Yuuki H."/>
            <person name="Oshima A."/>
            <person name="Sasaki N."/>
            <person name="Aotsuka S."/>
            <person name="Yoshikawa Y."/>
            <person name="Matsunawa H."/>
            <person name="Ichihara T."/>
            <person name="Shiohata N."/>
            <person name="Sano S."/>
            <person name="Moriya S."/>
            <person name="Momiyama H."/>
            <person name="Satoh N."/>
            <person name="Takami S."/>
            <person name="Terashima Y."/>
            <person name="Suzuki O."/>
            <person name="Nakagawa S."/>
            <person name="Senoh A."/>
            <person name="Mizoguchi H."/>
            <person name="Goto Y."/>
            <person name="Shimizu F."/>
            <person name="Wakebe H."/>
            <person name="Hishigaki H."/>
            <person name="Watanabe T."/>
            <person name="Sugiyama A."/>
            <person name="Takemoto M."/>
            <person name="Kawakami B."/>
            <person name="Yamazaki M."/>
            <person name="Watanabe K."/>
            <person name="Kumagai A."/>
            <person name="Itakura S."/>
            <person name="Fukuzumi Y."/>
            <person name="Fujimori Y."/>
            <person name="Komiyama M."/>
            <person name="Tashiro H."/>
            <person name="Tanigami A."/>
            <person name="Fujiwara T."/>
            <person name="Ono T."/>
            <person name="Yamada K."/>
            <person name="Fujii Y."/>
            <person name="Ozaki K."/>
            <person name="Hirao M."/>
            <person name="Ohmori Y."/>
            <person name="Kawabata A."/>
            <person name="Hikiji T."/>
            <person name="Kobatake N."/>
            <person name="Inagaki H."/>
            <person name="Ikema Y."/>
            <person name="Okamoto S."/>
            <person name="Okitani R."/>
            <person name="Kawakami T."/>
            <person name="Noguchi S."/>
            <person name="Itoh T."/>
            <person name="Shigeta K."/>
            <person name="Senba T."/>
            <person name="Matsumura K."/>
            <person name="Nakajima Y."/>
            <person name="Mizuno T."/>
            <person name="Morinaga M."/>
            <person name="Sasaki M."/>
            <person name="Togashi T."/>
            <person name="Oyama M."/>
            <person name="Hata H."/>
            <person name="Watanabe M."/>
            <person name="Komatsu T."/>
            <person name="Mizushima-Sugano J."/>
            <person name="Satoh T."/>
            <person name="Shirai Y."/>
            <person name="Takahashi Y."/>
            <person name="Nakagawa K."/>
            <person name="Okumura K."/>
            <person name="Nagase T."/>
            <person name="Nomura N."/>
            <person name="Kikuchi H."/>
            <person name="Masuho Y."/>
            <person name="Yamashita R."/>
            <person name="Nakai K."/>
            <person name="Yada T."/>
            <person name="Nakamura Y."/>
            <person name="Ohara O."/>
            <person name="Isogai T."/>
            <person name="Sugano S."/>
        </authorList>
    </citation>
    <scope>NUCLEOTIDE SEQUENCE [LARGE SCALE MRNA] (ISOFORMS 1 AND 2)</scope>
    <source>
        <tissue>Thymus</tissue>
    </source>
</reference>
<reference key="4">
    <citation type="journal article" date="2006" name="Nature">
        <title>The DNA sequence and biological annotation of human chromosome 1.</title>
        <authorList>
            <person name="Gregory S.G."/>
            <person name="Barlow K.F."/>
            <person name="McLay K.E."/>
            <person name="Kaul R."/>
            <person name="Swarbreck D."/>
            <person name="Dunham A."/>
            <person name="Scott C.E."/>
            <person name="Howe K.L."/>
            <person name="Woodfine K."/>
            <person name="Spencer C.C.A."/>
            <person name="Jones M.C."/>
            <person name="Gillson C."/>
            <person name="Searle S."/>
            <person name="Zhou Y."/>
            <person name="Kokocinski F."/>
            <person name="McDonald L."/>
            <person name="Evans R."/>
            <person name="Phillips K."/>
            <person name="Atkinson A."/>
            <person name="Cooper R."/>
            <person name="Jones C."/>
            <person name="Hall R.E."/>
            <person name="Andrews T.D."/>
            <person name="Lloyd C."/>
            <person name="Ainscough R."/>
            <person name="Almeida J.P."/>
            <person name="Ambrose K.D."/>
            <person name="Anderson F."/>
            <person name="Andrew R.W."/>
            <person name="Ashwell R.I.S."/>
            <person name="Aubin K."/>
            <person name="Babbage A.K."/>
            <person name="Bagguley C.L."/>
            <person name="Bailey J."/>
            <person name="Beasley H."/>
            <person name="Bethel G."/>
            <person name="Bird C.P."/>
            <person name="Bray-Allen S."/>
            <person name="Brown J.Y."/>
            <person name="Brown A.J."/>
            <person name="Buckley D."/>
            <person name="Burton J."/>
            <person name="Bye J."/>
            <person name="Carder C."/>
            <person name="Chapman J.C."/>
            <person name="Clark S.Y."/>
            <person name="Clarke G."/>
            <person name="Clee C."/>
            <person name="Cobley V."/>
            <person name="Collier R.E."/>
            <person name="Corby N."/>
            <person name="Coville G.J."/>
            <person name="Davies J."/>
            <person name="Deadman R."/>
            <person name="Dunn M."/>
            <person name="Earthrowl M."/>
            <person name="Ellington A.G."/>
            <person name="Errington H."/>
            <person name="Frankish A."/>
            <person name="Frankland J."/>
            <person name="French L."/>
            <person name="Garner P."/>
            <person name="Garnett J."/>
            <person name="Gay L."/>
            <person name="Ghori M.R.J."/>
            <person name="Gibson R."/>
            <person name="Gilby L.M."/>
            <person name="Gillett W."/>
            <person name="Glithero R.J."/>
            <person name="Grafham D.V."/>
            <person name="Griffiths C."/>
            <person name="Griffiths-Jones S."/>
            <person name="Grocock R."/>
            <person name="Hammond S."/>
            <person name="Harrison E.S.I."/>
            <person name="Hart E."/>
            <person name="Haugen E."/>
            <person name="Heath P.D."/>
            <person name="Holmes S."/>
            <person name="Holt K."/>
            <person name="Howden P.J."/>
            <person name="Hunt A.R."/>
            <person name="Hunt S.E."/>
            <person name="Hunter G."/>
            <person name="Isherwood J."/>
            <person name="James R."/>
            <person name="Johnson C."/>
            <person name="Johnson D."/>
            <person name="Joy A."/>
            <person name="Kay M."/>
            <person name="Kershaw J.K."/>
            <person name="Kibukawa M."/>
            <person name="Kimberley A.M."/>
            <person name="King A."/>
            <person name="Knights A.J."/>
            <person name="Lad H."/>
            <person name="Laird G."/>
            <person name="Lawlor S."/>
            <person name="Leongamornlert D.A."/>
            <person name="Lloyd D.M."/>
            <person name="Loveland J."/>
            <person name="Lovell J."/>
            <person name="Lush M.J."/>
            <person name="Lyne R."/>
            <person name="Martin S."/>
            <person name="Mashreghi-Mohammadi M."/>
            <person name="Matthews L."/>
            <person name="Matthews N.S.W."/>
            <person name="McLaren S."/>
            <person name="Milne S."/>
            <person name="Mistry S."/>
            <person name="Moore M.J.F."/>
            <person name="Nickerson T."/>
            <person name="O'Dell C.N."/>
            <person name="Oliver K."/>
            <person name="Palmeiri A."/>
            <person name="Palmer S.A."/>
            <person name="Parker A."/>
            <person name="Patel D."/>
            <person name="Pearce A.V."/>
            <person name="Peck A.I."/>
            <person name="Pelan S."/>
            <person name="Phelps K."/>
            <person name="Phillimore B.J."/>
            <person name="Plumb R."/>
            <person name="Rajan J."/>
            <person name="Raymond C."/>
            <person name="Rouse G."/>
            <person name="Saenphimmachak C."/>
            <person name="Sehra H.K."/>
            <person name="Sheridan E."/>
            <person name="Shownkeen R."/>
            <person name="Sims S."/>
            <person name="Skuce C.D."/>
            <person name="Smith M."/>
            <person name="Steward C."/>
            <person name="Subramanian S."/>
            <person name="Sycamore N."/>
            <person name="Tracey A."/>
            <person name="Tromans A."/>
            <person name="Van Helmond Z."/>
            <person name="Wall M."/>
            <person name="Wallis J.M."/>
            <person name="White S."/>
            <person name="Whitehead S.L."/>
            <person name="Wilkinson J.E."/>
            <person name="Willey D.L."/>
            <person name="Williams H."/>
            <person name="Wilming L."/>
            <person name="Wray P.W."/>
            <person name="Wu Z."/>
            <person name="Coulson A."/>
            <person name="Vaudin M."/>
            <person name="Sulston J.E."/>
            <person name="Durbin R.M."/>
            <person name="Hubbard T."/>
            <person name="Wooster R."/>
            <person name="Dunham I."/>
            <person name="Carter N.P."/>
            <person name="McVean G."/>
            <person name="Ross M.T."/>
            <person name="Harrow J."/>
            <person name="Olson M.V."/>
            <person name="Beck S."/>
            <person name="Rogers J."/>
            <person name="Bentley D.R."/>
        </authorList>
    </citation>
    <scope>NUCLEOTIDE SEQUENCE [LARGE SCALE GENOMIC DNA]</scope>
</reference>
<reference key="5">
    <citation type="submission" date="2005-09" db="EMBL/GenBank/DDBJ databases">
        <authorList>
            <person name="Mural R.J."/>
            <person name="Istrail S."/>
            <person name="Sutton G.G."/>
            <person name="Florea L."/>
            <person name="Halpern A.L."/>
            <person name="Mobarry C.M."/>
            <person name="Lippert R."/>
            <person name="Walenz B."/>
            <person name="Shatkay H."/>
            <person name="Dew I."/>
            <person name="Miller J.R."/>
            <person name="Flanigan M.J."/>
            <person name="Edwards N.J."/>
            <person name="Bolanos R."/>
            <person name="Fasulo D."/>
            <person name="Halldorsson B.V."/>
            <person name="Hannenhalli S."/>
            <person name="Turner R."/>
            <person name="Yooseph S."/>
            <person name="Lu F."/>
            <person name="Nusskern D.R."/>
            <person name="Shue B.C."/>
            <person name="Zheng X.H."/>
            <person name="Zhong F."/>
            <person name="Delcher A.L."/>
            <person name="Huson D.H."/>
            <person name="Kravitz S.A."/>
            <person name="Mouchard L."/>
            <person name="Reinert K."/>
            <person name="Remington K.A."/>
            <person name="Clark A.G."/>
            <person name="Waterman M.S."/>
            <person name="Eichler E.E."/>
            <person name="Adams M.D."/>
            <person name="Hunkapiller M.W."/>
            <person name="Myers E.W."/>
            <person name="Venter J.C."/>
        </authorList>
    </citation>
    <scope>NUCLEOTIDE SEQUENCE [LARGE SCALE GENOMIC DNA]</scope>
</reference>
<reference key="6">
    <citation type="journal article" date="2004" name="Genome Res.">
        <title>The status, quality, and expansion of the NIH full-length cDNA project: the Mammalian Gene Collection (MGC).</title>
        <authorList>
            <consortium name="The MGC Project Team"/>
        </authorList>
    </citation>
    <scope>NUCLEOTIDE SEQUENCE [LARGE SCALE MRNA] (ISOFORM 1)</scope>
    <source>
        <tissue>Ovary</tissue>
    </source>
</reference>
<reference key="7">
    <citation type="journal article" date="2000" name="Genomics">
        <title>MAGOH interacts with a novel RNA-binding protein.</title>
        <authorList>
            <person name="Zhao X.F."/>
            <person name="Nowak N.J."/>
            <person name="Shows T.B."/>
            <person name="Aplan P.D."/>
        </authorList>
    </citation>
    <scope>INTERACTION WITH RBM8A</scope>
</reference>
<reference key="8">
    <citation type="journal article" date="2002" name="RNA">
        <title>Purification and characterization of native spliceosomes suitable for three-dimensional structural analysis.</title>
        <authorList>
            <person name="Jurica M.S."/>
            <person name="Licklider L.J."/>
            <person name="Gygi S.P."/>
            <person name="Grigorieff N."/>
            <person name="Moore M.J."/>
        </authorList>
    </citation>
    <scope>IDENTIFICATION BY MASS SPECTROMETRY</scope>
    <scope>IDENTIFICATION IN THE SPLICEOSOMAL C COMPLEX</scope>
</reference>
<reference key="9">
    <citation type="journal article" date="2003" name="Nat. Struct. Biol.">
        <title>A novel mode of RBD-protein recognition in the Y14-Mago complex.</title>
        <authorList>
            <person name="Fribourg S."/>
            <person name="Gatfield D."/>
            <person name="Izaurralde E."/>
            <person name="Conti E."/>
        </authorList>
    </citation>
    <scope>FUNCTION</scope>
    <scope>INTERACTION WITH RBM8A</scope>
</reference>
<reference key="10">
    <citation type="journal article" date="2004" name="EMBO Rep.">
        <title>Molecular insights into the interaction of PYM with the Mago-Y14 core of the exon junction complex.</title>
        <authorList>
            <person name="Bono F."/>
            <person name="Ebert J."/>
            <person name="Unterholzner L."/>
            <person name="Guettler T."/>
            <person name="Izaurralde E."/>
            <person name="Conti E."/>
        </authorList>
    </citation>
    <scope>INTERACTION WITH PYM1</scope>
</reference>
<reference key="11">
    <citation type="journal article" date="2005" name="Mol. Cell">
        <title>Exon-junction complex components specify distinct routes of nonsense-mediated mRNA decay with differential cofactor requirements.</title>
        <authorList>
            <person name="Gehring N.H."/>
            <person name="Kunz J.B."/>
            <person name="Neu-Yilik G."/>
            <person name="Breit S."/>
            <person name="Viegas M.H."/>
            <person name="Hentze M.W."/>
            <person name="Kulozik A.E."/>
        </authorList>
    </citation>
    <scope>FUNCTION</scope>
    <scope>MUTAGENESIS OF 16-LYS-GLU-17; 41-LYS-ASN-42; 66-ASP--GLU-68; 72-GLU-ASP-73; 85-ARG--GLU-87; 130-LYS--PHE-134 AND LEU-136</scope>
</reference>
<reference key="12">
    <citation type="journal article" date="2005" name="Nat. Struct. Mol. Biol.">
        <title>The exon junction core complex is locked onto RNA by inhibition of eIF4AIII ATPase activity.</title>
        <authorList>
            <person name="Ballut L."/>
            <person name="Marchadier B."/>
            <person name="Baguet A."/>
            <person name="Tomasetto C."/>
            <person name="Seraphin B."/>
            <person name="Le Hir H."/>
        </authorList>
    </citation>
    <scope>IDENTIFICATION IN THE CORE EXON JUNCTION COMPLEX</scope>
</reference>
<reference key="13">
    <citation type="journal article" date="2005" name="RNA">
        <title>Biochemical analysis of the EJC reveals two new factors and a stable tetrameric protein core.</title>
        <authorList>
            <person name="Tange T.O."/>
            <person name="Shibuya T."/>
            <person name="Jurica M.S."/>
            <person name="Moore M.J."/>
        </authorList>
    </citation>
    <scope>IDENTIFICATION IN THE CORE EXON JUNCTION COMPLEX</scope>
    <scope>IDENTIFICATION IN A MRNA SPLICING-DEPENDENT EXON JUNCTION COMPLEX</scope>
    <scope>IDENTIFICATION BY MASS SPECTROMETRY</scope>
</reference>
<reference key="14">
    <citation type="journal article" date="2007" name="Nat. Struct. Mol. Biol.">
        <title>PYM binds the cytoplasmic exon-junction complex and ribosomes to enhance translation of spliced mRNAs.</title>
        <authorList>
            <person name="Diem M.D."/>
            <person name="Chan C.C."/>
            <person name="Younis I."/>
            <person name="Dreyfuss G."/>
        </authorList>
    </citation>
    <scope>INTERACTION WITH PYM1</scope>
</reference>
<reference key="15">
    <citation type="journal article" date="2009" name="Anal. Chem.">
        <title>Lys-N and trypsin cover complementary parts of the phosphoproteome in a refined SCX-based approach.</title>
        <authorList>
            <person name="Gauci S."/>
            <person name="Helbig A.O."/>
            <person name="Slijper M."/>
            <person name="Krijgsveld J."/>
            <person name="Heck A.J."/>
            <person name="Mohammed S."/>
        </authorList>
    </citation>
    <scope>ACETYLATION [LARGE SCALE ANALYSIS] AT MET-1</scope>
    <scope>IDENTIFICATION BY MASS SPECTROMETRY [LARGE SCALE ANALYSIS]</scope>
</reference>
<reference key="16">
    <citation type="journal article" date="2009" name="Cell">
        <title>Disassembly of exon junction complexes by PYM.</title>
        <authorList>
            <person name="Gehring N.H."/>
            <person name="Lamprinaki S."/>
            <person name="Kulozik A.E."/>
            <person name="Hentze M.W."/>
        </authorList>
    </citation>
    <scope>INTERACTION WITH PYM1</scope>
    <scope>MUTAGENESIS OF GLU-68; GLU-72; ASP-73 AND GLU-117</scope>
</reference>
<reference key="17">
    <citation type="journal article" date="2009" name="RNA">
        <title>Assembly and mobility of exon-exon junction complexes in living cells.</title>
        <authorList>
            <person name="Schmidt U."/>
            <person name="Im K.-B."/>
            <person name="Benzing C."/>
            <person name="Janjetovic S."/>
            <person name="Rippe K."/>
            <person name="Lichter P."/>
            <person name="Wachsmuth M."/>
        </authorList>
    </citation>
    <scope>SUBCELLULAR LOCATION</scope>
</reference>
<reference key="18">
    <citation type="journal article" date="2012" name="Mol. Cell. Biol.">
        <title>Proteins associated with the exon junction complex also control the alternative splicing of apoptotic regulators.</title>
        <authorList>
            <person name="Michelle L."/>
            <person name="Cloutier A."/>
            <person name="Toutant J."/>
            <person name="Shkreta L."/>
            <person name="Thibault P."/>
            <person name="Durand M."/>
            <person name="Garneau D."/>
            <person name="Gendron D."/>
            <person name="Lapointe E."/>
            <person name="Couture S."/>
            <person name="Le Hir H."/>
            <person name="Klinck R."/>
            <person name="Elela S.A."/>
            <person name="Prinos P."/>
            <person name="Chabot B."/>
        </authorList>
    </citation>
    <scope>FUNCTION</scope>
</reference>
<reference key="19">
    <citation type="journal article" date="2012" name="Mol. Cell. Proteomics">
        <title>Comparative large-scale characterisation of plant vs. mammal proteins reveals similar and idiosyncratic N-alpha acetylation features.</title>
        <authorList>
            <person name="Bienvenut W.V."/>
            <person name="Sumpton D."/>
            <person name="Martinez A."/>
            <person name="Lilla S."/>
            <person name="Espagne C."/>
            <person name="Meinnel T."/>
            <person name="Giglione C."/>
        </authorList>
    </citation>
    <scope>ACETYLATION [LARGE SCALE ANALYSIS] AT MET-1</scope>
    <scope>IDENTIFICATION BY MASS SPECTROMETRY [LARGE SCALE ANALYSIS]</scope>
</reference>
<reference key="20">
    <citation type="journal article" date="2012" name="Proc. Natl. Acad. Sci. U.S.A.">
        <title>N-terminal acetylome analyses and functional insights of the N-terminal acetyltransferase NatB.</title>
        <authorList>
            <person name="Van Damme P."/>
            <person name="Lasa M."/>
            <person name="Polevoda B."/>
            <person name="Gazquez C."/>
            <person name="Elosegui-Artola A."/>
            <person name="Kim D.S."/>
            <person name="De Juan-Pardo E."/>
            <person name="Demeyer K."/>
            <person name="Hole K."/>
            <person name="Larrea E."/>
            <person name="Timmerman E."/>
            <person name="Prieto J."/>
            <person name="Arnesen T."/>
            <person name="Sherman F."/>
            <person name="Gevaert K."/>
            <person name="Aldabe R."/>
        </authorList>
    </citation>
    <scope>ACETYLATION [LARGE SCALE ANALYSIS] AT MET-1</scope>
    <scope>IDENTIFICATION BY MASS SPECTROMETRY [LARGE SCALE ANALYSIS]</scope>
</reference>
<reference key="21">
    <citation type="journal article" date="2013" name="RNA Biol.">
        <title>Two mammalian MAGOH genes contribute to exon junction complex composition and nonsense-mediated decay.</title>
        <authorList>
            <person name="Singh K.K."/>
            <person name="Wachsmuth L."/>
            <person name="Kulozik A.E."/>
            <person name="Gehring N.H."/>
        </authorList>
    </citation>
    <scope>FUNCTION</scope>
    <scope>SUBUNIT</scope>
</reference>
<reference evidence="22" key="22">
    <citation type="journal article" date="2003" name="Curr. Biol.">
        <title>Structure of the Y14-Magoh core of the exon junction complex.</title>
        <authorList>
            <person name="Lau C.K."/>
            <person name="Diem M.D."/>
            <person name="Dreyfuss G."/>
            <person name="Van Duyne G.D."/>
        </authorList>
    </citation>
    <scope>X-RAY CRYSTALLOGRAPHY (2.0 ANGSTROMS) IN COMPLEX WITH RBM8A</scope>
</reference>
<reference evidence="24 25" key="23">
    <citation type="journal article" date="2006" name="Cell">
        <title>The crystal structure of the exon junction complex reveals how it maintains a stable grip on mRNA.</title>
        <authorList>
            <person name="Bono F."/>
            <person name="Ebert J."/>
            <person name="Lorentzen E."/>
            <person name="Conti E."/>
        </authorList>
    </citation>
    <scope>X-RAY CRYSTALLOGRAPHY (2.21 ANGSTROMS) IN THE EJC COMPLEX WITH CASC3; EIF4A3; RBM8A AND AMP-PNP</scope>
</reference>
<reference evidence="23" key="24">
    <citation type="journal article" date="2006" name="Science">
        <title>Structure of the exon junction core complex with a trapped DEAD-box ATPase bound to RNA.</title>
        <authorList>
            <person name="Andersen C.B."/>
            <person name="Ballut L."/>
            <person name="Johansen J.S."/>
            <person name="Chamieh H."/>
            <person name="Nielsen K.H."/>
            <person name="Oliveira C.L."/>
            <person name="Pedersen J.S."/>
            <person name="Seraphin B."/>
            <person name="Le Hir H."/>
            <person name="Andersen G.R."/>
        </authorList>
    </citation>
    <scope>X-RAY CRYSTALLOGRAPHY (2.3 ANGSTROMS) IN THE EJC COMPLEX WITH CASC3; EIF4A3; RBM8A AND ADP-NP</scope>
</reference>
<reference evidence="27" key="25">
    <citation type="journal article" date="2009" name="RNA">
        <title>Mechanism of ATP turnover inhibition in the EJC.</title>
        <authorList>
            <person name="Nielsen K.H."/>
            <person name="Chamieh H."/>
            <person name="Andersen C.B."/>
            <person name="Fredslund F."/>
            <person name="Hamborg K."/>
            <person name="Le Hir H."/>
            <person name="Andersen G.R."/>
        </authorList>
    </citation>
    <scope>X-RAY CRYSTALLOGRAPHY (2.3 ANGSTROMS) IN THE EJC COMPLEX WITH CASC3; EIF4A3; RBM8A AND TRANSITION STATE ANALOG ADP-ALF3</scope>
</reference>
<reference evidence="26" key="26">
    <citation type="journal article" date="2010" name="Proc. Natl. Acad. Sci. U.S.A.">
        <title>Insights into the recruitment of the NMD machinery from the crystal structure of a core EJC-UPF3b complex.</title>
        <authorList>
            <person name="Buchwald G."/>
            <person name="Ebert J."/>
            <person name="Basquin C."/>
            <person name="Sauliere J."/>
            <person name="Jayachandran U."/>
            <person name="Bono F."/>
            <person name="Le Hir H."/>
            <person name="Conti E."/>
        </authorList>
    </citation>
    <scope>X-RAY CRYSTALLOGRAPHY (3.40 ANGSTROMS) IN THE EJC COMPLEX WITH CASC3; EIF4A3; RBM8A; UPF3B; UPF2 AND RNA</scope>
    <scope>IDENTIFICATION IN THE EJC CORE COMPLEX WITH UPF3A</scope>
</reference>
<reference evidence="28" key="27">
    <citation type="journal article" date="2023" name="Nature">
        <title>mRNA recognition and packaging by the human transcription-export complex.</title>
        <authorList>
            <person name="Pacheco-Fiallos B."/>
            <person name="Vorlander M.K."/>
            <person name="Riabov-Bassat D."/>
            <person name="Fin L."/>
            <person name="O'Reilly F.J."/>
            <person name="Ayala F.I."/>
            <person name="Schellhaas U."/>
            <person name="Rappsilber J."/>
            <person name="Plaschka C."/>
        </authorList>
    </citation>
    <scope>STRUCTURE BY ELECTRON MICROSCOPY (2.40 ANGSTROMS) IN COMPLEX WITH THOC4; EIF4A3 AND RBM8A</scope>
    <scope>SUBUNIT</scope>
</reference>
<name>MGN_HUMAN</name>
<organism>
    <name type="scientific">Homo sapiens</name>
    <name type="common">Human</name>
    <dbReference type="NCBI Taxonomy" id="9606"/>
    <lineage>
        <taxon>Eukaryota</taxon>
        <taxon>Metazoa</taxon>
        <taxon>Chordata</taxon>
        <taxon>Craniata</taxon>
        <taxon>Vertebrata</taxon>
        <taxon>Euteleostomi</taxon>
        <taxon>Mammalia</taxon>
        <taxon>Eutheria</taxon>
        <taxon>Euarchontoglires</taxon>
        <taxon>Primates</taxon>
        <taxon>Haplorrhini</taxon>
        <taxon>Catarrhini</taxon>
        <taxon>Hominidae</taxon>
        <taxon>Homo</taxon>
    </lineage>
</organism>
<sequence>MESDFYLRYYVGHKGKFGHEFLEFEFRPDGKLRYANNSNYKNDVMIRKEAYVHKSVMEELKRIIDDSEITKEDDALWPPPDRVGRQELEIVIGDEHISFTTSKIGSLIDVNQSKDPEGLRVFYYLVQDLKCLVFSLIGLHFKIKPI</sequence>
<proteinExistence type="evidence at protein level"/>
<gene>
    <name type="primary">MAGOH</name>
    <name type="synonym">MAGOHA</name>
</gene>
<feature type="chain" id="PRO_0000174145" description="Protein mago nashi homolog">
    <location>
        <begin position="1"/>
        <end position="146"/>
    </location>
</feature>
<feature type="modified residue" description="N-acetylmethionine" evidence="29 30 31">
    <location>
        <position position="1"/>
    </location>
</feature>
<feature type="splice variant" id="VSP_056246" description="In isoform 2." evidence="20">
    <location>
        <begin position="50"/>
        <end position="86"/>
    </location>
</feature>
<feature type="mutagenesis site" description="Impaired nonsense-mediated decay activity." evidence="9">
    <original>KF</original>
    <variation>EA</variation>
    <location>
        <begin position="16"/>
        <end position="17"/>
    </location>
</feature>
<feature type="mutagenesis site" description="Complete loss of nonsense-mediated decay activity." evidence="9">
    <original>KN</original>
    <variation>DA</variation>
    <location>
        <begin position="41"/>
        <end position="42"/>
    </location>
</feature>
<feature type="mutagenesis site" description="Slightly reduced nonsense-mediated decay activity." evidence="9">
    <original>DSE</original>
    <variation>RSR</variation>
    <location>
        <begin position="66"/>
        <end position="68"/>
    </location>
</feature>
<feature type="mutagenesis site" description="Abolishes interaction with PYM1 leading to increase EJC association with spliced mRNAs; when associated with R-72; K-73 and R-117." evidence="16">
    <original>E</original>
    <variation>R</variation>
    <location>
        <position position="68"/>
    </location>
</feature>
<feature type="mutagenesis site" description="Fully active." evidence="9">
    <original>ED</original>
    <variation>RK</variation>
    <location>
        <begin position="72"/>
        <end position="73"/>
    </location>
</feature>
<feature type="mutagenesis site" description="Abolishes interaction with PYM1 leading to increase EJC association with spliced mRNAs; when associated with R-68; K-73 and R-117." evidence="16">
    <original>E</original>
    <variation>R</variation>
    <location>
        <position position="72"/>
    </location>
</feature>
<feature type="mutagenesis site" description="Abolishes interaction with PYM1 leading to increase EJC association with spliced mRNAs; when associated with R-68; R-72 and R-117." evidence="16">
    <original>D</original>
    <variation>K</variation>
    <location>
        <position position="73"/>
    </location>
</feature>
<feature type="mutagenesis site" description="Fully active." evidence="9">
    <original>RQE</original>
    <variation>EQR</variation>
    <location>
        <begin position="85"/>
        <end position="87"/>
    </location>
</feature>
<feature type="mutagenesis site" description="Abolishes interaction with PYM1 leading to increase EJC association with spliced mRNAs; when associated with R-68; R-72 and K-73." evidence="16">
    <original>E</original>
    <variation>R</variation>
    <location>
        <position position="117"/>
    </location>
</feature>
<feature type="mutagenesis site" description="Complete loss of nonsense-mediated decay activity." evidence="9">
    <original>KCLVF</original>
    <variation>ECLVA</variation>
    <location>
        <begin position="130"/>
        <end position="134"/>
    </location>
</feature>
<feature type="mutagenesis site" description="Complete loss of nonsense-mediated decay activity." evidence="9">
    <original>L</original>
    <variation>R</variation>
    <location>
        <position position="136"/>
    </location>
</feature>
<feature type="strand" evidence="32">
    <location>
        <begin position="5"/>
        <end position="15"/>
    </location>
</feature>
<feature type="strand" evidence="32">
    <location>
        <begin position="18"/>
        <end position="26"/>
    </location>
</feature>
<feature type="strand" evidence="32">
    <location>
        <begin position="30"/>
        <end position="38"/>
    </location>
</feature>
<feature type="turn" evidence="32">
    <location>
        <begin position="40"/>
        <end position="42"/>
    </location>
</feature>
<feature type="strand" evidence="32">
    <location>
        <begin position="44"/>
        <end position="52"/>
    </location>
</feature>
<feature type="helix" evidence="32">
    <location>
        <begin position="54"/>
        <end position="67"/>
    </location>
</feature>
<feature type="helix" evidence="32">
    <location>
        <begin position="69"/>
        <end position="71"/>
    </location>
</feature>
<feature type="strand" evidence="34">
    <location>
        <begin position="74"/>
        <end position="77"/>
    </location>
</feature>
<feature type="strand" evidence="32">
    <location>
        <begin position="85"/>
        <end position="92"/>
    </location>
</feature>
<feature type="strand" evidence="32">
    <location>
        <begin position="95"/>
        <end position="101"/>
    </location>
</feature>
<feature type="helix" evidence="32">
    <location>
        <begin position="107"/>
        <end position="110"/>
    </location>
</feature>
<feature type="strand" evidence="33">
    <location>
        <begin position="113"/>
        <end position="115"/>
    </location>
</feature>
<feature type="helix" evidence="32">
    <location>
        <begin position="116"/>
        <end position="141"/>
    </location>
</feature>
<accession>P61326</accession>
<accession>B1ARP8</accession>
<accession>B2R5A2</accession>
<accession>O35169</accession>
<accession>P50606</accession>
<accession>Q5SW69</accession>
<keyword id="KW-0002">3D-structure</keyword>
<keyword id="KW-0007">Acetylation</keyword>
<keyword id="KW-0025">Alternative splicing</keyword>
<keyword id="KW-0963">Cytoplasm</keyword>
<keyword id="KW-0507">mRNA processing</keyword>
<keyword id="KW-0508">mRNA splicing</keyword>
<keyword id="KW-0509">mRNA transport</keyword>
<keyword id="KW-0866">Nonsense-mediated mRNA decay</keyword>
<keyword id="KW-0539">Nucleus</keyword>
<keyword id="KW-1185">Reference proteome</keyword>
<keyword id="KW-0694">RNA-binding</keyword>
<keyword id="KW-0747">Spliceosome</keyword>
<keyword id="KW-0810">Translation regulation</keyword>
<keyword id="KW-0813">Transport</keyword>
<dbReference type="EMBL" id="AF035940">
    <property type="protein sequence ID" value="AAC39606.1"/>
    <property type="molecule type" value="mRNA"/>
</dbReference>
<dbReference type="EMBL" id="AF067173">
    <property type="protein sequence ID" value="AAD32457.1"/>
    <property type="molecule type" value="mRNA"/>
</dbReference>
<dbReference type="EMBL" id="AK297895">
    <property type="protein sequence ID" value="BAG60216.1"/>
    <property type="molecule type" value="mRNA"/>
</dbReference>
<dbReference type="EMBL" id="AK312113">
    <property type="protein sequence ID" value="BAG35049.1"/>
    <property type="molecule type" value="mRNA"/>
</dbReference>
<dbReference type="EMBL" id="AL606760">
    <property type="status" value="NOT_ANNOTATED_CDS"/>
    <property type="molecule type" value="Genomic_DNA"/>
</dbReference>
<dbReference type="EMBL" id="CH471059">
    <property type="protein sequence ID" value="EAX06747.1"/>
    <property type="molecule type" value="Genomic_DNA"/>
</dbReference>
<dbReference type="EMBL" id="CH471059">
    <property type="protein sequence ID" value="EAX06748.1"/>
    <property type="molecule type" value="Genomic_DNA"/>
</dbReference>
<dbReference type="EMBL" id="BC018211">
    <property type="protein sequence ID" value="AAH18211.1"/>
    <property type="molecule type" value="mRNA"/>
</dbReference>
<dbReference type="CCDS" id="CCDS577.1">
    <molecule id="P61326-1"/>
</dbReference>
<dbReference type="RefSeq" id="NP_002361.1">
    <molecule id="P61326-1"/>
    <property type="nucleotide sequence ID" value="NM_002370.4"/>
</dbReference>
<dbReference type="PDB" id="1P27">
    <property type="method" value="X-ray"/>
    <property type="resolution" value="2.00 A"/>
    <property type="chains" value="A/C=2-145"/>
</dbReference>
<dbReference type="PDB" id="2HYI">
    <property type="method" value="X-ray"/>
    <property type="resolution" value="2.30 A"/>
    <property type="chains" value="A/G=1-146"/>
</dbReference>
<dbReference type="PDB" id="2J0Q">
    <property type="method" value="X-ray"/>
    <property type="resolution" value="3.20 A"/>
    <property type="chains" value="C/F=1-146"/>
</dbReference>
<dbReference type="PDB" id="2J0S">
    <property type="method" value="X-ray"/>
    <property type="resolution" value="2.21 A"/>
    <property type="chains" value="C=1-146"/>
</dbReference>
<dbReference type="PDB" id="2XB2">
    <property type="method" value="X-ray"/>
    <property type="resolution" value="3.40 A"/>
    <property type="chains" value="C/Y=1-146"/>
</dbReference>
<dbReference type="PDB" id="3EX7">
    <property type="method" value="X-ray"/>
    <property type="resolution" value="2.30 A"/>
    <property type="chains" value="A/E=1-146"/>
</dbReference>
<dbReference type="PDB" id="7A5P">
    <property type="method" value="EM"/>
    <property type="resolution" value="5.00 A"/>
    <property type="chains" value="v=1-146"/>
</dbReference>
<dbReference type="PDB" id="7W59">
    <property type="method" value="EM"/>
    <property type="resolution" value="3.60 A"/>
    <property type="chains" value="v=1-146"/>
</dbReference>
<dbReference type="PDB" id="7W5A">
    <property type="method" value="EM"/>
    <property type="resolution" value="3.60 A"/>
    <property type="chains" value="v=1-146"/>
</dbReference>
<dbReference type="PDB" id="7W5B">
    <property type="method" value="EM"/>
    <property type="resolution" value="4.30 A"/>
    <property type="chains" value="v=1-146"/>
</dbReference>
<dbReference type="PDB" id="7ZNJ">
    <property type="method" value="EM"/>
    <property type="resolution" value="2.40 A"/>
    <property type="chains" value="B/G/L/b/g/l=1-146"/>
</dbReference>
<dbReference type="PDB" id="8C6J">
    <property type="method" value="EM"/>
    <property type="resolution" value="2.80 A"/>
    <property type="chains" value="9=1-146"/>
</dbReference>
<dbReference type="PDB" id="8I0W">
    <property type="method" value="EM"/>
    <property type="resolution" value="3.40 A"/>
    <property type="chains" value="v=1-146"/>
</dbReference>
<dbReference type="PDB" id="9FMD">
    <property type="method" value="EM"/>
    <property type="resolution" value="3.30 A"/>
    <property type="chains" value="9=1-146"/>
</dbReference>
<dbReference type="PDBsum" id="1P27"/>
<dbReference type="PDBsum" id="2HYI"/>
<dbReference type="PDBsum" id="2J0Q"/>
<dbReference type="PDBsum" id="2J0S"/>
<dbReference type="PDBsum" id="2XB2"/>
<dbReference type="PDBsum" id="3EX7"/>
<dbReference type="PDBsum" id="7A5P"/>
<dbReference type="PDBsum" id="7W59"/>
<dbReference type="PDBsum" id="7W5A"/>
<dbReference type="PDBsum" id="7W5B"/>
<dbReference type="PDBsum" id="7ZNJ"/>
<dbReference type="PDBsum" id="8C6J"/>
<dbReference type="PDBsum" id="8I0W"/>
<dbReference type="PDBsum" id="9FMD"/>
<dbReference type="EMDB" id="EMD-14803"/>
<dbReference type="EMDB" id="EMD-16452"/>
<dbReference type="EMDB" id="EMD-32317"/>
<dbReference type="EMDB" id="EMD-32319"/>
<dbReference type="EMDB" id="EMD-32321"/>
<dbReference type="EMDB" id="EMD-35113"/>
<dbReference type="SMR" id="P61326"/>
<dbReference type="BioGRID" id="110290">
    <property type="interactions" value="264"/>
</dbReference>
<dbReference type="ComplexPortal" id="CPX-1941">
    <property type="entry name" value="Exon junction core complex, MAGOH variant"/>
</dbReference>
<dbReference type="ComplexPortal" id="CPX-1942">
    <property type="entry name" value="Exon junction subcomplex MAGOH-Y14"/>
</dbReference>
<dbReference type="ComplexPortal" id="CPX-9481">
    <property type="entry name" value="ALYREF-binding exon junction complex"/>
</dbReference>
<dbReference type="CORUM" id="P61326"/>
<dbReference type="DIP" id="DIP-33069N"/>
<dbReference type="FunCoup" id="P61326">
    <property type="interactions" value="3563"/>
</dbReference>
<dbReference type="IntAct" id="P61326">
    <property type="interactions" value="165"/>
</dbReference>
<dbReference type="MINT" id="P61326"/>
<dbReference type="STRING" id="9606.ENSP00000360525"/>
<dbReference type="TCDB" id="3.A.18.1.1">
    <property type="family name" value="the nuclear mrna exporter (mrna-e) family"/>
</dbReference>
<dbReference type="GlyGen" id="P61326">
    <property type="glycosylation" value="1 site, 1 O-linked glycan (1 site)"/>
</dbReference>
<dbReference type="iPTMnet" id="P61326"/>
<dbReference type="PhosphoSitePlus" id="P61326"/>
<dbReference type="SwissPalm" id="P61326"/>
<dbReference type="BioMuta" id="MAGOH"/>
<dbReference type="DMDM" id="47117708"/>
<dbReference type="jPOST" id="P61326"/>
<dbReference type="MassIVE" id="P61326"/>
<dbReference type="PaxDb" id="9606-ENSP00000360525"/>
<dbReference type="PeptideAtlas" id="P61326"/>
<dbReference type="ProteomicsDB" id="3350"/>
<dbReference type="ProteomicsDB" id="57294">
    <molecule id="P61326-1"/>
</dbReference>
<dbReference type="Pumba" id="P61326"/>
<dbReference type="TopDownProteomics" id="P61326-1">
    <molecule id="P61326-1"/>
</dbReference>
<dbReference type="Antibodypedia" id="4217">
    <property type="antibodies" value="304 antibodies from 32 providers"/>
</dbReference>
<dbReference type="DNASU" id="4116"/>
<dbReference type="Ensembl" id="ENST00000371466.4">
    <molecule id="P61326-2"/>
    <property type="protein sequence ID" value="ENSP00000360521.4"/>
    <property type="gene ID" value="ENSG00000162385.11"/>
</dbReference>
<dbReference type="Ensembl" id="ENST00000371470.8">
    <molecule id="P61326-1"/>
    <property type="protein sequence ID" value="ENSP00000360525.3"/>
    <property type="gene ID" value="ENSG00000162385.11"/>
</dbReference>
<dbReference type="GeneID" id="4116"/>
<dbReference type="KEGG" id="hsa:4116"/>
<dbReference type="MANE-Select" id="ENST00000371470.8">
    <property type="protein sequence ID" value="ENSP00000360525.3"/>
    <property type="RefSeq nucleotide sequence ID" value="NM_002370.4"/>
    <property type="RefSeq protein sequence ID" value="NP_002361.1"/>
</dbReference>
<dbReference type="UCSC" id="uc001cvf.2">
    <molecule id="P61326-1"/>
    <property type="organism name" value="human"/>
</dbReference>
<dbReference type="AGR" id="HGNC:6815"/>
<dbReference type="CTD" id="4116"/>
<dbReference type="DisGeNET" id="4116"/>
<dbReference type="GeneCards" id="MAGOH"/>
<dbReference type="HGNC" id="HGNC:6815">
    <property type="gene designation" value="MAGOH"/>
</dbReference>
<dbReference type="HPA" id="ENSG00000162385">
    <property type="expression patterns" value="Low tissue specificity"/>
</dbReference>
<dbReference type="MIM" id="602603">
    <property type="type" value="gene"/>
</dbReference>
<dbReference type="neXtProt" id="NX_P61326"/>
<dbReference type="OpenTargets" id="ENSG00000162385"/>
<dbReference type="PharmGKB" id="PA30563"/>
<dbReference type="VEuPathDB" id="HostDB:ENSG00000162385"/>
<dbReference type="eggNOG" id="KOG3392">
    <property type="taxonomic scope" value="Eukaryota"/>
</dbReference>
<dbReference type="GeneTree" id="ENSGT00390000003156"/>
<dbReference type="HOGENOM" id="CLU_109497_1_1_1"/>
<dbReference type="InParanoid" id="P61326"/>
<dbReference type="OMA" id="NQTDEFY"/>
<dbReference type="OrthoDB" id="9509555at2759"/>
<dbReference type="PAN-GO" id="P61326">
    <property type="GO annotations" value="3 GO annotations based on evolutionary models"/>
</dbReference>
<dbReference type="PhylomeDB" id="P61326"/>
<dbReference type="TreeFam" id="TF300128"/>
<dbReference type="PathwayCommons" id="P61326"/>
<dbReference type="Reactome" id="R-HSA-159236">
    <property type="pathway name" value="Transport of Mature mRNA derived from an Intron-Containing Transcript"/>
</dbReference>
<dbReference type="Reactome" id="R-HSA-72163">
    <property type="pathway name" value="mRNA Splicing - Major Pathway"/>
</dbReference>
<dbReference type="Reactome" id="R-HSA-72187">
    <property type="pathway name" value="mRNA 3'-end processing"/>
</dbReference>
<dbReference type="Reactome" id="R-HSA-73856">
    <property type="pathway name" value="RNA Polymerase II Transcription Termination"/>
</dbReference>
<dbReference type="Reactome" id="R-HSA-9010553">
    <property type="pathway name" value="Regulation of expression of SLITs and ROBOs"/>
</dbReference>
<dbReference type="Reactome" id="R-HSA-975957">
    <property type="pathway name" value="Nonsense Mediated Decay (NMD) enhanced by the Exon Junction Complex (EJC)"/>
</dbReference>
<dbReference type="SignaLink" id="P61326"/>
<dbReference type="SIGNOR" id="P61326"/>
<dbReference type="BioGRID-ORCS" id="4116">
    <property type="hits" value="555 hits in 1144 CRISPR screens"/>
</dbReference>
<dbReference type="CD-CODE" id="804901D1">
    <property type="entry name" value="Nuclear speckle"/>
</dbReference>
<dbReference type="ChiTaRS" id="MAGOH">
    <property type="organism name" value="human"/>
</dbReference>
<dbReference type="EvolutionaryTrace" id="P61326"/>
<dbReference type="GeneWiki" id="MAGOH"/>
<dbReference type="GenomeRNAi" id="4116"/>
<dbReference type="Pharos" id="P61326">
    <property type="development level" value="Tbio"/>
</dbReference>
<dbReference type="PRO" id="PR:P61326"/>
<dbReference type="Proteomes" id="UP000005640">
    <property type="component" value="Chromosome 1"/>
</dbReference>
<dbReference type="RNAct" id="P61326">
    <property type="molecule type" value="protein"/>
</dbReference>
<dbReference type="Bgee" id="ENSG00000162385">
    <property type="expression patterns" value="Expressed in oocyte and 204 other cell types or tissues"/>
</dbReference>
<dbReference type="GO" id="GO:0071013">
    <property type="term" value="C:catalytic step 2 spliceosome"/>
    <property type="evidence" value="ECO:0000314"/>
    <property type="project" value="UniProtKB"/>
</dbReference>
<dbReference type="GO" id="GO:0005829">
    <property type="term" value="C:cytosol"/>
    <property type="evidence" value="ECO:0000303"/>
    <property type="project" value="ComplexPortal"/>
</dbReference>
<dbReference type="GO" id="GO:0035145">
    <property type="term" value="C:exon-exon junction complex"/>
    <property type="evidence" value="ECO:0000314"/>
    <property type="project" value="UniProtKB"/>
</dbReference>
<dbReference type="GO" id="GO:1990501">
    <property type="term" value="C:exon-exon junction subcomplex mago-y14"/>
    <property type="evidence" value="ECO:0000353"/>
    <property type="project" value="ComplexPortal"/>
</dbReference>
<dbReference type="GO" id="GO:0016607">
    <property type="term" value="C:nuclear speck"/>
    <property type="evidence" value="ECO:0007669"/>
    <property type="project" value="UniProtKB-SubCell"/>
</dbReference>
<dbReference type="GO" id="GO:0005654">
    <property type="term" value="C:nucleoplasm"/>
    <property type="evidence" value="ECO:0000304"/>
    <property type="project" value="Reactome"/>
</dbReference>
<dbReference type="GO" id="GO:0005634">
    <property type="term" value="C:nucleus"/>
    <property type="evidence" value="ECO:0000314"/>
    <property type="project" value="UniProtKB"/>
</dbReference>
<dbReference type="GO" id="GO:0003723">
    <property type="term" value="F:RNA binding"/>
    <property type="evidence" value="ECO:0007005"/>
    <property type="project" value="UniProtKB"/>
</dbReference>
<dbReference type="GO" id="GO:0006406">
    <property type="term" value="P:mRNA export from nucleus"/>
    <property type="evidence" value="ECO:0000303"/>
    <property type="project" value="ComplexPortal"/>
</dbReference>
<dbReference type="GO" id="GO:0000398">
    <property type="term" value="P:mRNA splicing, via spliceosome"/>
    <property type="evidence" value="ECO:0000305"/>
    <property type="project" value="UniProtKB"/>
</dbReference>
<dbReference type="GO" id="GO:0000184">
    <property type="term" value="P:nuclear-transcribed mRNA catabolic process, nonsense-mediated decay"/>
    <property type="evidence" value="ECO:0000315"/>
    <property type="project" value="UniProtKB"/>
</dbReference>
<dbReference type="GO" id="GO:0000381">
    <property type="term" value="P:regulation of alternative mRNA splicing, via spliceosome"/>
    <property type="evidence" value="ECO:0000315"/>
    <property type="project" value="UniProtKB"/>
</dbReference>
<dbReference type="GO" id="GO:0050684">
    <property type="term" value="P:regulation of mRNA processing"/>
    <property type="evidence" value="ECO:0000314"/>
    <property type="project" value="ComplexPortal"/>
</dbReference>
<dbReference type="GO" id="GO:2000622">
    <property type="term" value="P:regulation of nuclear-transcribed mRNA catabolic process, nonsense-mediated decay"/>
    <property type="evidence" value="ECO:0000314"/>
    <property type="project" value="ComplexPortal"/>
</dbReference>
<dbReference type="GO" id="GO:0006417">
    <property type="term" value="P:regulation of translation"/>
    <property type="evidence" value="ECO:0007669"/>
    <property type="project" value="UniProtKB-KW"/>
</dbReference>
<dbReference type="GO" id="GO:0008380">
    <property type="term" value="P:RNA splicing"/>
    <property type="evidence" value="ECO:0000318"/>
    <property type="project" value="GO_Central"/>
</dbReference>
<dbReference type="CDD" id="cd11295">
    <property type="entry name" value="Mago_nashi"/>
    <property type="match status" value="1"/>
</dbReference>
<dbReference type="FunFam" id="3.30.1560.10:FF:000001">
    <property type="entry name" value="Protein mago nashi homolog"/>
    <property type="match status" value="1"/>
</dbReference>
<dbReference type="Gene3D" id="3.30.1560.10">
    <property type="entry name" value="Mago nashi"/>
    <property type="match status" value="1"/>
</dbReference>
<dbReference type="IDEAL" id="IID00375"/>
<dbReference type="InterPro" id="IPR004023">
    <property type="entry name" value="Mago_nashi"/>
</dbReference>
<dbReference type="InterPro" id="IPR036605">
    <property type="entry name" value="Mago_nashi_sf"/>
</dbReference>
<dbReference type="PANTHER" id="PTHR12638">
    <property type="entry name" value="PROTEIN MAGO NASHI HOMOLOG"/>
    <property type="match status" value="1"/>
</dbReference>
<dbReference type="PANTHER" id="PTHR12638:SF2">
    <property type="entry name" value="PROTEIN MAGO NASHI HOMOLOG"/>
    <property type="match status" value="1"/>
</dbReference>
<dbReference type="Pfam" id="PF02792">
    <property type="entry name" value="Mago_nashi"/>
    <property type="match status" value="1"/>
</dbReference>
<dbReference type="SUPFAM" id="SSF89817">
    <property type="entry name" value="Mago nashi protein"/>
    <property type="match status" value="1"/>
</dbReference>
<comment type="function">
    <text evidence="4 5 9 18 19">Required for pre-mRNA splicing as component of the spliceosome (PubMed:11991638). Plays a redundant role with MAGOHB as core component of the exon junction complex (EJC) and in the nonsense-mediated decay (NMD) pathway (PubMed:23917022). The EJC is a dynamic structure consisting of core proteins and several peripheral nuclear and cytoplasmic associated factors that join the complex only transiently either during EJC assembly or during subsequent mRNA metabolism. The EJC marks the position of the exon-exon junction in the mature mRNA for the gene expression machinery and the core components remain bound to spliced mRNAs throughout all stages of mRNA metabolism thereby influencing downstream processes including nuclear mRNA export, subcellular mRNA localization, translation efficiency and nonsense-mediated mRNA decay (NMD). The MAGOH-RBM8A heterodimer inhibits the ATPase activity of EIF4A3, thereby trapping the ATP-bound EJC core onto spliced mRNA in a stable conformation. The MAGOH-RBM8A heterodimer interacts with the EJC key regulator PYM1 leading to EJC disassembly in the cytoplasm and translation enhancement of EJC-bearing spliced mRNAs by recruiting them to the ribosomal 48S pre-initiation complex. Involved in the splicing modulation of BCL2L1/Bcl-X (and probably other apoptotic genes); specifically inhibits formation of proapoptotic isoforms such as Bcl-X(S); the function is different from the established EJC assembly.</text>
</comment>
<comment type="subunit">
    <text evidence="3 4 5 6 7 8 10 11 12 13 14 16 17 19">Heterodimer with RBM8A (PubMed:12730685, PubMed:12781131, PubMed:23917022). Core component of the mRNA splicing-dependent exon junction complex (EJC); the core complex contains CASC3, EIF4A3, MAGOH or MAGOHB, and RBM8A (PubMed:11991638, PubMed:16170325, PubMed:16314458, PubMed:16923391, PubMed:16931718, PubMed:19033377, PubMed:20479275, PubMed:23917022). Component of the ALYREF/THOC4-EJC-RNA complex; in the complex interacts with EIF4A3, RBM8A and THOC4 (via the RRM domain); these interactions are likely specific to RNA-bound EJC (PubMed:16314458, PubMed:37020021). Interacts with PYM1; the interaction is direct and dissociates the EJC from spliced mRNAs (PubMed:14968132, PubMed:18026120, PubMed:19410547). Identified in a complex composed of the EJC core, UPF3B and UPF2. The EJC core can also interact with UPF3A (in vitro) (PubMed:20479275). Identified in the spliceosome C complex (PubMed:11991638).</text>
</comment>
<comment type="interaction">
    <interactant intactId="EBI-299134">
        <id>P61326</id>
    </interactant>
    <interactant intactId="EBI-299118">
        <id>O15234</id>
        <label>CASC3</label>
    </interactant>
    <organismsDiffer>false</organismsDiffer>
    <experiments>27</experiments>
</comment>
<comment type="interaction">
    <interactant intactId="EBI-299134">
        <id>P61326</id>
    </interactant>
    <interactant intactId="EBI-739624">
        <id>Q8NHQ1</id>
        <label>CEP70</label>
    </interactant>
    <organismsDiffer>false</organismsDiffer>
    <experiments>3</experiments>
</comment>
<comment type="interaction">
    <interactant intactId="EBI-299134">
        <id>P61326</id>
    </interactant>
    <interactant intactId="EBI-10237931">
        <id>Q9BQC3</id>
        <label>DPH2</label>
    </interactant>
    <organismsDiffer>false</organismsDiffer>
    <experiments>3</experiments>
</comment>
<comment type="interaction">
    <interactant intactId="EBI-299134">
        <id>P61326</id>
    </interactant>
    <interactant intactId="EBI-710457">
        <id>Q7L190</id>
        <label>DPPA4</label>
    </interactant>
    <organismsDiffer>false</organismsDiffer>
    <experiments>3</experiments>
</comment>
<comment type="interaction">
    <interactant intactId="EBI-299134">
        <id>P61326</id>
    </interactant>
    <interactant intactId="EBI-299104">
        <id>P38919</id>
        <label>EIF4A3</label>
    </interactant>
    <organismsDiffer>false</organismsDiffer>
    <experiments>30</experiments>
</comment>
<comment type="interaction">
    <interactant intactId="EBI-299134">
        <id>P61326</id>
    </interactant>
    <interactant intactId="EBI-11022345">
        <id>P51114-2</id>
        <label>FXR1</label>
    </interactant>
    <organismsDiffer>false</organismsDiffer>
    <experiments>3</experiments>
</comment>
<comment type="interaction">
    <interactant intactId="EBI-299134">
        <id>P61326</id>
    </interactant>
    <interactant intactId="EBI-618309">
        <id>Q08379</id>
        <label>GOLGA2</label>
    </interactant>
    <organismsDiffer>false</organismsDiffer>
    <experiments>6</experiments>
</comment>
<comment type="interaction">
    <interactant intactId="EBI-299134">
        <id>P61326</id>
    </interactant>
    <interactant intactId="EBI-747310">
        <id>O94829</id>
        <label>IPO13</label>
    </interactant>
    <organismsDiffer>false</organismsDiffer>
    <experiments>4</experiments>
</comment>
<comment type="interaction">
    <interactant intactId="EBI-299134">
        <id>P61326</id>
    </interactant>
    <interactant intactId="EBI-10293968">
        <id>Q96T49</id>
        <label>PPP1R16B</label>
    </interactant>
    <organismsDiffer>false</organismsDiffer>
    <experiments>3</experiments>
</comment>
<comment type="interaction">
    <interactant intactId="EBI-299134">
        <id>P61326</id>
    </interactant>
    <interactant intactId="EBI-2352802">
        <id>Q9BRP8</id>
        <label>PYM1</label>
    </interactant>
    <organismsDiffer>false</organismsDiffer>
    <experiments>18</experiments>
</comment>
<comment type="interaction">
    <interactant intactId="EBI-299134">
        <id>P61326</id>
    </interactant>
    <interactant intactId="EBI-447231">
        <id>Q9Y5S9</id>
        <label>RBM8A</label>
    </interactant>
    <organismsDiffer>false</organismsDiffer>
    <experiments>43</experiments>
</comment>
<comment type="interaction">
    <interactant intactId="EBI-299134">
        <id>P61326</id>
    </interactant>
    <interactant intactId="EBI-5773674">
        <id>Q9Y5S9-1</id>
        <label>RBM8A</label>
    </interactant>
    <organismsDiffer>false</organismsDiffer>
    <experiments>7</experiments>
</comment>
<comment type="interaction">
    <interactant intactId="EBI-299134">
        <id>P61326</id>
    </interactant>
    <interactant intactId="EBI-742268">
        <id>O75478</id>
        <label>TADA2A</label>
    </interactant>
    <organismsDiffer>false</organismsDiffer>
    <experiments>3</experiments>
</comment>
<comment type="interaction">
    <interactant intactId="EBI-299134">
        <id>P61326</id>
    </interactant>
    <interactant intactId="EBI-372780">
        <id>Q9BZI7</id>
        <label>UPF3B</label>
    </interactant>
    <organismsDiffer>false</organismsDiffer>
    <experiments>7</experiments>
</comment>
<comment type="interaction">
    <interactant intactId="EBI-299134">
        <id>P61326</id>
    </interactant>
    <interactant intactId="EBI-15674130">
        <id>Q9BZI7-2</id>
        <label>UPF3B</label>
    </interactant>
    <organismsDiffer>false</organismsDiffer>
    <experiments>2</experiments>
</comment>
<comment type="interaction">
    <interactant intactId="EBI-299134">
        <id>P61326</id>
    </interactant>
    <interactant intactId="EBI-2602314">
        <id>Q15776</id>
        <label>ZKSCAN8</label>
    </interactant>
    <organismsDiffer>false</organismsDiffer>
    <experiments>3</experiments>
</comment>
<comment type="interaction">
    <interactant intactId="EBI-299134">
        <id>P61326</id>
    </interactant>
    <interactant intactId="EBI-527853">
        <id>Q9UGI0</id>
        <label>ZRANB1</label>
    </interactant>
    <organismsDiffer>false</organismsDiffer>
    <experiments>3</experiments>
</comment>
<comment type="subcellular location">
    <subcellularLocation>
        <location evidence="15">Nucleus</location>
    </subcellularLocation>
    <subcellularLocation>
        <location evidence="15">Nucleus speckle</location>
    </subcellularLocation>
    <subcellularLocation>
        <location evidence="15">Cytoplasm</location>
    </subcellularLocation>
    <text evidence="1 2 15">Detected in granule-like structures in the dendroplasm (By similarity). Travels to the cytoplasm as part of the exon junction complex (EJC) bound to mRNA. Colocalizes with the core EJC, ALYREF/THOC4, NXF1 and UAP56 in the nucleus and nuclear speckles (PubMed:19324961).</text>
</comment>
<comment type="alternative products">
    <event type="alternative splicing"/>
    <isoform>
        <id>P61326-1</id>
        <name>1</name>
        <sequence type="displayed"/>
    </isoform>
    <isoform>
        <id>P61326-2</id>
        <name>2</name>
        <sequence type="described" ref="VSP_056246"/>
    </isoform>
</comment>
<comment type="tissue specificity">
    <text>Ubiquitous.</text>
</comment>
<comment type="similarity">
    <text evidence="21">Belongs to the mago nashi family.</text>
</comment>
<evidence type="ECO:0000250" key="1"/>
<evidence type="ECO:0000250" key="2">
    <source>
        <dbReference type="UniProtKB" id="Q27W02"/>
    </source>
</evidence>
<evidence type="ECO:0000269" key="3">
    <source>
    </source>
</evidence>
<evidence type="ECO:0000269" key="4">
    <source>
    </source>
</evidence>
<evidence type="ECO:0000269" key="5">
    <source>
    </source>
</evidence>
<evidence type="ECO:0000269" key="6">
    <source>
    </source>
</evidence>
<evidence type="ECO:0000269" key="7">
    <source>
    </source>
</evidence>
<evidence type="ECO:0000269" key="8">
    <source>
    </source>
</evidence>
<evidence type="ECO:0000269" key="9">
    <source>
    </source>
</evidence>
<evidence type="ECO:0000269" key="10">
    <source>
    </source>
</evidence>
<evidence type="ECO:0000269" key="11">
    <source>
    </source>
</evidence>
<evidence type="ECO:0000269" key="12">
    <source>
    </source>
</evidence>
<evidence type="ECO:0000269" key="13">
    <source>
    </source>
</evidence>
<evidence type="ECO:0000269" key="14">
    <source>
    </source>
</evidence>
<evidence type="ECO:0000269" key="15">
    <source>
    </source>
</evidence>
<evidence type="ECO:0000269" key="16">
    <source>
    </source>
</evidence>
<evidence type="ECO:0000269" key="17">
    <source>
    </source>
</evidence>
<evidence type="ECO:0000269" key="18">
    <source>
    </source>
</evidence>
<evidence type="ECO:0000269" key="19">
    <source>
    </source>
</evidence>
<evidence type="ECO:0000303" key="20">
    <source>
    </source>
</evidence>
<evidence type="ECO:0000305" key="21"/>
<evidence type="ECO:0007744" key="22">
    <source>
        <dbReference type="PDB" id="1P27"/>
    </source>
</evidence>
<evidence type="ECO:0007744" key="23">
    <source>
        <dbReference type="PDB" id="2HYI"/>
    </source>
</evidence>
<evidence type="ECO:0007744" key="24">
    <source>
        <dbReference type="PDB" id="2J0Q"/>
    </source>
</evidence>
<evidence type="ECO:0007744" key="25">
    <source>
        <dbReference type="PDB" id="2J0S"/>
    </source>
</evidence>
<evidence type="ECO:0007744" key="26">
    <source>
        <dbReference type="PDB" id="2XB2"/>
    </source>
</evidence>
<evidence type="ECO:0007744" key="27">
    <source>
        <dbReference type="PDB" id="3EX7"/>
    </source>
</evidence>
<evidence type="ECO:0007744" key="28">
    <source>
        <dbReference type="PDB" id="7ZNJ"/>
    </source>
</evidence>
<evidence type="ECO:0007744" key="29">
    <source>
    </source>
</evidence>
<evidence type="ECO:0007744" key="30">
    <source>
    </source>
</evidence>
<evidence type="ECO:0007744" key="31">
    <source>
    </source>
</evidence>
<evidence type="ECO:0007829" key="32">
    <source>
        <dbReference type="PDB" id="1P27"/>
    </source>
</evidence>
<evidence type="ECO:0007829" key="33">
    <source>
        <dbReference type="PDB" id="2HYI"/>
    </source>
</evidence>
<evidence type="ECO:0007829" key="34">
    <source>
        <dbReference type="PDB" id="7ZNJ"/>
    </source>
</evidence>
<protein>
    <recommendedName>
        <fullName>Protein mago nashi homolog</fullName>
    </recommendedName>
</protein>